<evidence type="ECO:0000269" key="1">
    <source>
    </source>
</evidence>
<evidence type="ECO:0000305" key="2"/>
<protein>
    <recommendedName>
        <fullName>Ovohemerythrin</fullName>
    </recommendedName>
    <alternativeName>
        <fullName>14 kDa yolk protein</fullName>
    </alternativeName>
    <alternativeName>
        <fullName>YP14</fullName>
    </alternativeName>
</protein>
<proteinExistence type="evidence at protein level"/>
<sequence>YDIPEPFRWDESFKVFYE</sequence>
<feature type="chain" id="PRO_0000191841" description="Ovohemerythrin">
    <location>
        <begin position="1"/>
        <end position="18" status="greater than"/>
    </location>
</feature>
<feature type="non-terminal residue">
    <location>
        <position position="18"/>
    </location>
</feature>
<organism>
    <name type="scientific">Theromyzon tessulatum</name>
    <name type="common">Duck leech</name>
    <dbReference type="NCBI Taxonomy" id="13286"/>
    <lineage>
        <taxon>Eukaryota</taxon>
        <taxon>Metazoa</taxon>
        <taxon>Spiralia</taxon>
        <taxon>Lophotrochozoa</taxon>
        <taxon>Annelida</taxon>
        <taxon>Clitellata</taxon>
        <taxon>Hirudinea</taxon>
        <taxon>Rhynchobdellida</taxon>
        <taxon>Glossiphoniidae</taxon>
        <taxon>Theromyzon</taxon>
    </lineage>
</organism>
<comment type="function">
    <text evidence="1">Major yolk protein. This iron protein may play a role in the detoxification of free iron after a blood meal.</text>
</comment>
<comment type="subcellular location">
    <subcellularLocation>
        <location evidence="1">Secreted</location>
    </subcellularLocation>
</comment>
<comment type="similarity">
    <text evidence="2">Belongs to the hemerythrin family.</text>
</comment>
<reference key="1">
    <citation type="journal article" date="1992" name="Eur. J. Biochem.">
        <title>Ovohemerythrin, a major 14-kDa yolk protein distinct from vitellogenin in leech.</title>
        <authorList>
            <person name="Baert J.-L."/>
            <person name="Britel M."/>
            <person name="Sautiere P."/>
            <person name="Malecha J."/>
        </authorList>
    </citation>
    <scope>PROTEIN SEQUENCE</scope>
    <scope>FUNCTION</scope>
    <scope>SUBCELLULAR LOCATION</scope>
    <source>
        <tissue>Oocyte</tissue>
    </source>
</reference>
<accession>P80155</accession>
<keyword id="KW-0903">Direct protein sequencing</keyword>
<keyword id="KW-0408">Iron</keyword>
<keyword id="KW-0479">Metal-binding</keyword>
<keyword id="KW-0561">Oxygen transport</keyword>
<keyword id="KW-0964">Secreted</keyword>
<keyword id="KW-0813">Transport</keyword>
<dbReference type="PIR" id="S29264">
    <property type="entry name" value="S29264"/>
</dbReference>
<dbReference type="GO" id="GO:0005576">
    <property type="term" value="C:extracellular region"/>
    <property type="evidence" value="ECO:0007669"/>
    <property type="project" value="UniProtKB-SubCell"/>
</dbReference>
<dbReference type="GO" id="GO:0046872">
    <property type="term" value="F:metal ion binding"/>
    <property type="evidence" value="ECO:0007669"/>
    <property type="project" value="UniProtKB-KW"/>
</dbReference>
<dbReference type="GO" id="GO:0005344">
    <property type="term" value="F:oxygen carrier activity"/>
    <property type="evidence" value="ECO:0007669"/>
    <property type="project" value="UniProtKB-KW"/>
</dbReference>
<name>HEMTO_THETS</name>